<protein>
    <recommendedName>
        <fullName>Myosin heavy chain kinase B</fullName>
        <shortName evidence="5">MHCK-B</shortName>
        <ecNumber evidence="4">2.7.11.7</ecNumber>
    </recommendedName>
</protein>
<comment type="function">
    <text evidence="4 5">Catalyzes its autophosphorylation, which is needed for enzymatic activity and phosphorylates myosin II heavy chain at a threonine in the C-terminal tail region (PubMed:9115238). This phosphorylation is critical in regulating the assembly and disassembly of myosin II filament (PubMed:9115238). Participates in control of myosin localization (PubMed:9115238).</text>
</comment>
<comment type="catalytic activity">
    <reaction evidence="4">
        <text>L-threonyl-[myosin heavy-chain] + ATP = O-phospho-L-threonyl-[myosin heavy-chain] + ADP + H(+)</text>
        <dbReference type="Rhea" id="RHEA:11424"/>
        <dbReference type="Rhea" id="RHEA-COMP:13718"/>
        <dbReference type="Rhea" id="RHEA-COMP:13719"/>
        <dbReference type="ChEBI" id="CHEBI:15378"/>
        <dbReference type="ChEBI" id="CHEBI:30013"/>
        <dbReference type="ChEBI" id="CHEBI:30616"/>
        <dbReference type="ChEBI" id="CHEBI:61977"/>
        <dbReference type="ChEBI" id="CHEBI:456216"/>
        <dbReference type="EC" id="2.7.11.7"/>
    </reaction>
    <physiologicalReaction direction="left-to-right" evidence="4">
        <dbReference type="Rhea" id="RHEA:11425"/>
    </physiologicalReaction>
</comment>
<comment type="similarity">
    <text evidence="6">Belongs to the protein kinase superfamily. Alpha-type protein kinase family. ALPK subfamily.</text>
</comment>
<sequence length="732" mass="83168">MIFKVWFSYEDEEVELSELTNDTTVSAIRKILHEGKIFRFPYGTSQTDLQIGKMLPSGSGGGATADSKFEKFKARNTLADIQYKVGDTLYVRVKKSKPTNDSLLPTLNIAFLDGSERAIKWEYDPYTTTAQWTCTATLVKVEPVPFAEGAFRKAYHTLDLSKSGASGRYVSKIGKKPTPRPSYFEDVKMQMIAKKWADKYNSFKPPKKIEFLQSCVLEFVDRTSSDLICGAEPYVEGQYRKYNNNSGFVSNDERNTPQSFSHFTYEHSNHQLLIIDIQGVGDHYTDPQIHTYDGVGFGIGNLGQKGFEKFLDTHKCNAICQYLNLQSINPKSEKSDCGTVPRPDLIFPDTSERDNNNNNNNNNNNNNNNNNNNSNNNNNNNSSISKSLVEISSGSKERNDRDSPSRQLFVSNDGNTLNTNKERSKSKSIDLEKPEILINNKKKESINLETIKLIETIKGYHVTSHLCICDNLLFTGCSDNSIRVYDYKSQNMECVQTLKGHEGPVESICYNDQYLFSGSSDHSIKVWDLKKLRCIFTLEGHDKPVHTVLLNDKYLFSGSSDKTIKVWDLKTLECKYTLESHARAVKTLCISGQYLFSGSNDKTIKVWDLKTFRCNYTLKGHTKWVTTICILGTNLYSGSYDKTIRVWNLKSLECSATLRGHDRWVEHMVICDKLLFTASDDNTIKIWDLETLRCNTTLEGHNATVQCLAVWEDKKCVISCSHDQSIRVWGWN</sequence>
<gene>
    <name type="primary">mhkB</name>
    <name type="synonym">mhckB</name>
    <name type="ORF">DDB_G0289115</name>
</gene>
<reference key="1">
    <citation type="journal article" date="1997" name="J. Biol. Chem.">
        <title>Identification of a protein kinase from Dictyostelium with homology to the novel catalytic domain of myosin heavy chain kinase A.</title>
        <authorList>
            <person name="Clancy C.E."/>
            <person name="Mendoza M.G."/>
            <person name="Naismith T.V."/>
            <person name="Kolman M.F."/>
            <person name="Egelhoff T.T."/>
        </authorList>
    </citation>
    <scope>NUCLEOTIDE SEQUENCE [MRNA]</scope>
    <scope>FUNCTION</scope>
    <scope>CATALYTIC ACTIVITY</scope>
    <source>
        <strain>AX3</strain>
    </source>
</reference>
<reference key="2">
    <citation type="journal article" date="2005" name="Nature">
        <title>The genome of the social amoeba Dictyostelium discoideum.</title>
        <authorList>
            <person name="Eichinger L."/>
            <person name="Pachebat J.A."/>
            <person name="Gloeckner G."/>
            <person name="Rajandream M.A."/>
            <person name="Sucgang R."/>
            <person name="Berriman M."/>
            <person name="Song J."/>
            <person name="Olsen R."/>
            <person name="Szafranski K."/>
            <person name="Xu Q."/>
            <person name="Tunggal B."/>
            <person name="Kummerfeld S."/>
            <person name="Madera M."/>
            <person name="Konfortov B.A."/>
            <person name="Rivero F."/>
            <person name="Bankier A.T."/>
            <person name="Lehmann R."/>
            <person name="Hamlin N."/>
            <person name="Davies R."/>
            <person name="Gaudet P."/>
            <person name="Fey P."/>
            <person name="Pilcher K."/>
            <person name="Chen G."/>
            <person name="Saunders D."/>
            <person name="Sodergren E.J."/>
            <person name="Davis P."/>
            <person name="Kerhornou A."/>
            <person name="Nie X."/>
            <person name="Hall N."/>
            <person name="Anjard C."/>
            <person name="Hemphill L."/>
            <person name="Bason N."/>
            <person name="Farbrother P."/>
            <person name="Desany B."/>
            <person name="Just E."/>
            <person name="Morio T."/>
            <person name="Rost R."/>
            <person name="Churcher C.M."/>
            <person name="Cooper J."/>
            <person name="Haydock S."/>
            <person name="van Driessche N."/>
            <person name="Cronin A."/>
            <person name="Goodhead I."/>
            <person name="Muzny D.M."/>
            <person name="Mourier T."/>
            <person name="Pain A."/>
            <person name="Lu M."/>
            <person name="Harper D."/>
            <person name="Lindsay R."/>
            <person name="Hauser H."/>
            <person name="James K.D."/>
            <person name="Quiles M."/>
            <person name="Madan Babu M."/>
            <person name="Saito T."/>
            <person name="Buchrieser C."/>
            <person name="Wardroper A."/>
            <person name="Felder M."/>
            <person name="Thangavelu M."/>
            <person name="Johnson D."/>
            <person name="Knights A."/>
            <person name="Loulseged H."/>
            <person name="Mungall K.L."/>
            <person name="Oliver K."/>
            <person name="Price C."/>
            <person name="Quail M.A."/>
            <person name="Urushihara H."/>
            <person name="Hernandez J."/>
            <person name="Rabbinowitsch E."/>
            <person name="Steffen D."/>
            <person name="Sanders M."/>
            <person name="Ma J."/>
            <person name="Kohara Y."/>
            <person name="Sharp S."/>
            <person name="Simmonds M.N."/>
            <person name="Spiegler S."/>
            <person name="Tivey A."/>
            <person name="Sugano S."/>
            <person name="White B."/>
            <person name="Walker D."/>
            <person name="Woodward J.R."/>
            <person name="Winckler T."/>
            <person name="Tanaka Y."/>
            <person name="Shaulsky G."/>
            <person name="Schleicher M."/>
            <person name="Weinstock G.M."/>
            <person name="Rosenthal A."/>
            <person name="Cox E.C."/>
            <person name="Chisholm R.L."/>
            <person name="Gibbs R.A."/>
            <person name="Loomis W.F."/>
            <person name="Platzer M."/>
            <person name="Kay R.R."/>
            <person name="Williams J.G."/>
            <person name="Dear P.H."/>
            <person name="Noegel A.A."/>
            <person name="Barrell B.G."/>
            <person name="Kuspa A."/>
        </authorList>
    </citation>
    <scope>NUCLEOTIDE SEQUENCE [LARGE SCALE GENOMIC DNA]</scope>
    <source>
        <strain>AX4</strain>
    </source>
</reference>
<organism>
    <name type="scientific">Dictyostelium discoideum</name>
    <name type="common">Social amoeba</name>
    <dbReference type="NCBI Taxonomy" id="44689"/>
    <lineage>
        <taxon>Eukaryota</taxon>
        <taxon>Amoebozoa</taxon>
        <taxon>Evosea</taxon>
        <taxon>Eumycetozoa</taxon>
        <taxon>Dictyostelia</taxon>
        <taxon>Dictyosteliales</taxon>
        <taxon>Dictyosteliaceae</taxon>
        <taxon>Dictyostelium</taxon>
    </lineage>
</organism>
<feature type="chain" id="PRO_0000051048" description="Myosin heavy chain kinase B">
    <location>
        <begin position="1"/>
        <end position="732"/>
    </location>
</feature>
<feature type="domain" description="Alpha-type protein kinase" evidence="2">
    <location>
        <begin position="124"/>
        <end position="328"/>
    </location>
</feature>
<feature type="repeat" description="WD 1">
    <location>
        <begin position="458"/>
        <end position="486"/>
    </location>
</feature>
<feature type="repeat" description="WD 2">
    <location>
        <begin position="500"/>
        <end position="528"/>
    </location>
</feature>
<feature type="repeat" description="WD 3">
    <location>
        <begin position="540"/>
        <end position="568"/>
    </location>
</feature>
<feature type="repeat" description="WD 4">
    <location>
        <begin position="580"/>
        <end position="608"/>
    </location>
</feature>
<feature type="repeat" description="WD 5">
    <location>
        <begin position="620"/>
        <end position="648"/>
    </location>
</feature>
<feature type="repeat" description="WD 6">
    <location>
        <begin position="660"/>
        <end position="688"/>
    </location>
</feature>
<feature type="repeat" description="WD 7">
    <location>
        <begin position="700"/>
        <end position="730"/>
    </location>
</feature>
<feature type="region of interest" description="Disordered" evidence="3">
    <location>
        <begin position="331"/>
        <end position="428"/>
    </location>
</feature>
<feature type="compositionally biased region" description="Low complexity" evidence="3">
    <location>
        <begin position="356"/>
        <end position="394"/>
    </location>
</feature>
<feature type="compositionally biased region" description="Basic and acidic residues" evidence="3">
    <location>
        <begin position="395"/>
        <end position="404"/>
    </location>
</feature>
<feature type="compositionally biased region" description="Polar residues" evidence="3">
    <location>
        <begin position="405"/>
        <end position="419"/>
    </location>
</feature>
<feature type="binding site" evidence="1">
    <location>
        <begin position="298"/>
        <end position="303"/>
    </location>
    <ligand>
        <name>ATP</name>
        <dbReference type="ChEBI" id="CHEBI:30616"/>
    </ligand>
</feature>
<accession>P90648</accession>
<accession>Q54HZ5</accession>
<name>MHCKB_DICDI</name>
<keyword id="KW-0067">ATP-binding</keyword>
<keyword id="KW-0418">Kinase</keyword>
<keyword id="KW-0547">Nucleotide-binding</keyword>
<keyword id="KW-1185">Reference proteome</keyword>
<keyword id="KW-0677">Repeat</keyword>
<keyword id="KW-0723">Serine/threonine-protein kinase</keyword>
<keyword id="KW-0808">Transferase</keyword>
<keyword id="KW-0853">WD repeat</keyword>
<proteinExistence type="evidence at protein level"/>
<evidence type="ECO:0000255" key="1"/>
<evidence type="ECO:0000255" key="2">
    <source>
        <dbReference type="PROSITE-ProRule" id="PRU00501"/>
    </source>
</evidence>
<evidence type="ECO:0000256" key="3">
    <source>
        <dbReference type="SAM" id="MobiDB-lite"/>
    </source>
</evidence>
<evidence type="ECO:0000269" key="4">
    <source>
    </source>
</evidence>
<evidence type="ECO:0000303" key="5">
    <source>
    </source>
</evidence>
<evidence type="ECO:0000305" key="6"/>
<dbReference type="EC" id="2.7.11.7" evidence="4"/>
<dbReference type="EMBL" id="U90946">
    <property type="protein sequence ID" value="AAB50136.1"/>
    <property type="molecule type" value="mRNA"/>
</dbReference>
<dbReference type="EMBL" id="AAFI02000130">
    <property type="protein sequence ID" value="EAL62865.1"/>
    <property type="molecule type" value="Genomic_DNA"/>
</dbReference>
<dbReference type="RefSeq" id="XP_636368.1">
    <property type="nucleotide sequence ID" value="XM_631276.1"/>
</dbReference>
<dbReference type="SMR" id="P90648"/>
<dbReference type="FunCoup" id="P90648">
    <property type="interactions" value="519"/>
</dbReference>
<dbReference type="STRING" id="44689.P90648"/>
<dbReference type="PaxDb" id="44689-DDB0191333"/>
<dbReference type="EnsemblProtists" id="EAL62865">
    <property type="protein sequence ID" value="EAL62865"/>
    <property type="gene ID" value="DDB_G0289115"/>
</dbReference>
<dbReference type="GeneID" id="8626969"/>
<dbReference type="KEGG" id="ddi:DDB_G0289115"/>
<dbReference type="dictyBase" id="DDB_G0289115">
    <property type="gene designation" value="mhkB"/>
</dbReference>
<dbReference type="VEuPathDB" id="AmoebaDB:DDB_G0289115"/>
<dbReference type="eggNOG" id="KOG0274">
    <property type="taxonomic scope" value="Eukaryota"/>
</dbReference>
<dbReference type="HOGENOM" id="CLU_378764_0_0_1"/>
<dbReference type="InParanoid" id="P90648"/>
<dbReference type="OMA" id="MIAKKWA"/>
<dbReference type="PhylomeDB" id="P90648"/>
<dbReference type="BRENDA" id="2.7.11.7">
    <property type="organism ID" value="1939"/>
</dbReference>
<dbReference type="PRO" id="PR:P90648"/>
<dbReference type="Proteomes" id="UP000002195">
    <property type="component" value="Chromosome 5"/>
</dbReference>
<dbReference type="GO" id="GO:0005826">
    <property type="term" value="C:actomyosin contractile ring"/>
    <property type="evidence" value="ECO:0000314"/>
    <property type="project" value="dictyBase"/>
</dbReference>
<dbReference type="GO" id="GO:0005737">
    <property type="term" value="C:cytoplasm"/>
    <property type="evidence" value="ECO:0000314"/>
    <property type="project" value="dictyBase"/>
</dbReference>
<dbReference type="GO" id="GO:0005524">
    <property type="term" value="F:ATP binding"/>
    <property type="evidence" value="ECO:0000305"/>
    <property type="project" value="dictyBase"/>
</dbReference>
<dbReference type="GO" id="GO:0042802">
    <property type="term" value="F:identical protein binding"/>
    <property type="evidence" value="ECO:0000314"/>
    <property type="project" value="dictyBase"/>
</dbReference>
<dbReference type="GO" id="GO:0016905">
    <property type="term" value="F:myosin heavy chain kinase activity"/>
    <property type="evidence" value="ECO:0000314"/>
    <property type="project" value="dictyBase"/>
</dbReference>
<dbReference type="GO" id="GO:0045159">
    <property type="term" value="F:myosin II binding"/>
    <property type="evidence" value="ECO:0000353"/>
    <property type="project" value="dictyBase"/>
</dbReference>
<dbReference type="GO" id="GO:0004674">
    <property type="term" value="F:protein serine/threonine kinase activity"/>
    <property type="evidence" value="ECO:0000314"/>
    <property type="project" value="dictyBase"/>
</dbReference>
<dbReference type="GO" id="GO:0000281">
    <property type="term" value="P:mitotic cytokinesis"/>
    <property type="evidence" value="ECO:0000315"/>
    <property type="project" value="dictyBase"/>
</dbReference>
<dbReference type="GO" id="GO:0031037">
    <property type="term" value="P:myosin II filament disassembly"/>
    <property type="evidence" value="ECO:0000315"/>
    <property type="project" value="dictyBase"/>
</dbReference>
<dbReference type="GO" id="GO:1903013">
    <property type="term" value="P:response to differentiation-inducing factor 1"/>
    <property type="evidence" value="ECO:0007005"/>
    <property type="project" value="dictyBase"/>
</dbReference>
<dbReference type="CDD" id="cd16968">
    <property type="entry name" value="Alpha_kinase_MHCK_like"/>
    <property type="match status" value="1"/>
</dbReference>
<dbReference type="CDD" id="cd00200">
    <property type="entry name" value="WD40"/>
    <property type="match status" value="1"/>
</dbReference>
<dbReference type="FunFam" id="3.20.200.10:FF:000002">
    <property type="entry name" value="Eukaryotic elongation factor 2 kinase"/>
    <property type="match status" value="1"/>
</dbReference>
<dbReference type="FunFam" id="2.130.10.10:FF:003338">
    <property type="entry name" value="Myosin heavy chain kinase B"/>
    <property type="match status" value="1"/>
</dbReference>
<dbReference type="Gene3D" id="3.20.200.10">
    <property type="entry name" value="MHCK/EF2 kinase"/>
    <property type="match status" value="1"/>
</dbReference>
<dbReference type="Gene3D" id="3.30.200.20">
    <property type="entry name" value="Phosphorylase Kinase, domain 1"/>
    <property type="match status" value="2"/>
</dbReference>
<dbReference type="Gene3D" id="2.130.10.10">
    <property type="entry name" value="YVTN repeat-like/Quinoprotein amine dehydrogenase"/>
    <property type="match status" value="2"/>
</dbReference>
<dbReference type="InterPro" id="IPR004166">
    <property type="entry name" value="a-kinase_dom"/>
</dbReference>
<dbReference type="InterPro" id="IPR051852">
    <property type="entry name" value="Alpha-type_PK"/>
</dbReference>
<dbReference type="InterPro" id="IPR020472">
    <property type="entry name" value="G-protein_beta_WD-40_rep"/>
</dbReference>
<dbReference type="InterPro" id="IPR011009">
    <property type="entry name" value="Kinase-like_dom_sf"/>
</dbReference>
<dbReference type="InterPro" id="IPR015943">
    <property type="entry name" value="WD40/YVTN_repeat-like_dom_sf"/>
</dbReference>
<dbReference type="InterPro" id="IPR019775">
    <property type="entry name" value="WD40_repeat_CS"/>
</dbReference>
<dbReference type="InterPro" id="IPR036322">
    <property type="entry name" value="WD40_repeat_dom_sf"/>
</dbReference>
<dbReference type="InterPro" id="IPR001680">
    <property type="entry name" value="WD40_rpt"/>
</dbReference>
<dbReference type="PANTHER" id="PTHR45992">
    <property type="entry name" value="EUKARYOTIC ELONGATION FACTOR 2 KINASE-RELATED"/>
    <property type="match status" value="1"/>
</dbReference>
<dbReference type="PANTHER" id="PTHR45992:SF9">
    <property type="entry name" value="MYOSIN HEAVY CHAIN KINASE B"/>
    <property type="match status" value="1"/>
</dbReference>
<dbReference type="Pfam" id="PF02816">
    <property type="entry name" value="Alpha_kinase"/>
    <property type="match status" value="1"/>
</dbReference>
<dbReference type="Pfam" id="PF00400">
    <property type="entry name" value="WD40"/>
    <property type="match status" value="6"/>
</dbReference>
<dbReference type="PRINTS" id="PR00320">
    <property type="entry name" value="GPROTEINBRPT"/>
</dbReference>
<dbReference type="SMART" id="SM00811">
    <property type="entry name" value="Alpha_kinase"/>
    <property type="match status" value="1"/>
</dbReference>
<dbReference type="SMART" id="SM00320">
    <property type="entry name" value="WD40"/>
    <property type="match status" value="7"/>
</dbReference>
<dbReference type="SUPFAM" id="SSF56112">
    <property type="entry name" value="Protein kinase-like (PK-like)"/>
    <property type="match status" value="1"/>
</dbReference>
<dbReference type="SUPFAM" id="SSF50978">
    <property type="entry name" value="WD40 repeat-like"/>
    <property type="match status" value="1"/>
</dbReference>
<dbReference type="PROSITE" id="PS51158">
    <property type="entry name" value="ALPHA_KINASE"/>
    <property type="match status" value="1"/>
</dbReference>
<dbReference type="PROSITE" id="PS00678">
    <property type="entry name" value="WD_REPEATS_1"/>
    <property type="match status" value="5"/>
</dbReference>
<dbReference type="PROSITE" id="PS50082">
    <property type="entry name" value="WD_REPEATS_2"/>
    <property type="match status" value="6"/>
</dbReference>
<dbReference type="PROSITE" id="PS50294">
    <property type="entry name" value="WD_REPEATS_REGION"/>
    <property type="match status" value="1"/>
</dbReference>